<organism>
    <name type="scientific">Escherichia coli (strain K12)</name>
    <dbReference type="NCBI Taxonomy" id="83333"/>
    <lineage>
        <taxon>Bacteria</taxon>
        <taxon>Pseudomonadati</taxon>
        <taxon>Pseudomonadota</taxon>
        <taxon>Gammaproteobacteria</taxon>
        <taxon>Enterobacterales</taxon>
        <taxon>Enterobacteriaceae</taxon>
        <taxon>Escherichia</taxon>
    </lineage>
</organism>
<keyword id="KW-1185">Reference proteome</keyword>
<proteinExistence type="evidence at protein level"/>
<feature type="chain" id="PRO_0000447168" description="Protein YsaE">
    <location>
        <begin position="1"/>
        <end position="23"/>
    </location>
</feature>
<sequence>MRNAVSKAGIISRRRLLLFQFAG</sequence>
<gene>
    <name evidence="2" type="primary">ysaE</name>
    <name evidence="3" type="ordered locus">b4793</name>
</gene>
<dbReference type="EMBL" id="U00096">
    <property type="protein sequence ID" value="QNV50546.1"/>
    <property type="molecule type" value="Genomic_DNA"/>
</dbReference>
<dbReference type="InParanoid" id="P0DSH1"/>
<dbReference type="BioCyc" id="EcoCyc:MONOMER0-4505"/>
<dbReference type="Proteomes" id="UP000000625">
    <property type="component" value="Chromosome"/>
</dbReference>
<evidence type="ECO:0000269" key="1">
    <source>
    </source>
</evidence>
<evidence type="ECO:0000303" key="2">
    <source>
    </source>
</evidence>
<evidence type="ECO:0000312" key="3">
    <source>
        <dbReference type="EMBL" id="QNV50546.1"/>
    </source>
</evidence>
<protein>
    <recommendedName>
        <fullName evidence="2">Protein YsaE</fullName>
    </recommendedName>
</protein>
<accession>P0DSH1</accession>
<accession>A0A7H2C799</accession>
<name>YSAE_ECOLI</name>
<comment type="induction">
    <text evidence="1">Expressed in both exponential and stationary phase in rich medium; expression is considerably higher during exponential phase (at protein level).</text>
</comment>
<reference key="1">
    <citation type="journal article" date="1997" name="Science">
        <title>The complete genome sequence of Escherichia coli K-12.</title>
        <authorList>
            <person name="Blattner F.R."/>
            <person name="Plunkett G. III"/>
            <person name="Bloch C.A."/>
            <person name="Perna N.T."/>
            <person name="Burland V."/>
            <person name="Riley M."/>
            <person name="Collado-Vides J."/>
            <person name="Glasner J.D."/>
            <person name="Rode C.K."/>
            <person name="Mayhew G.F."/>
            <person name="Gregor J."/>
            <person name="Davis N.W."/>
            <person name="Kirkpatrick H.A."/>
            <person name="Goeden M.A."/>
            <person name="Rose D.J."/>
            <person name="Mau B."/>
            <person name="Shao Y."/>
        </authorList>
    </citation>
    <scope>NUCLEOTIDE SEQUENCE [LARGE SCALE GENOMIC DNA]</scope>
    <source>
        <strain>K12 / MG1655 / ATCC 47076</strain>
    </source>
</reference>
<reference key="2">
    <citation type="journal article" date="2019" name="MBio">
        <title>Identifying small proteins by ribosome profiling with stalled initiation complexes.</title>
        <authorList>
            <person name="Weaver J."/>
            <person name="Mohammad F."/>
            <person name="Buskirk A.R."/>
            <person name="Storz G."/>
        </authorList>
    </citation>
    <scope>IDENTIFICATION</scope>
    <scope>INDUCTION</scope>
    <source>
        <strain>K12 / MG1655 / ATCC 47076</strain>
    </source>
</reference>